<comment type="catalytic activity">
    <reaction>
        <text>2 glutathione + H2O2 = glutathione disulfide + 2 H2O</text>
        <dbReference type="Rhea" id="RHEA:16833"/>
        <dbReference type="ChEBI" id="CHEBI:15377"/>
        <dbReference type="ChEBI" id="CHEBI:16240"/>
        <dbReference type="ChEBI" id="CHEBI:57925"/>
        <dbReference type="ChEBI" id="CHEBI:58297"/>
        <dbReference type="EC" id="1.11.1.9"/>
    </reaction>
</comment>
<comment type="subcellular location">
    <subcellularLocation>
        <location evidence="4">Membrane</location>
        <topology evidence="4">Single-pass membrane protein</topology>
    </subcellularLocation>
</comment>
<comment type="similarity">
    <text evidence="4">Belongs to the glutathione peroxidase family.</text>
</comment>
<proteinExistence type="evidence at protein level"/>
<gene>
    <name type="primary">Gpx8</name>
</gene>
<organism>
    <name type="scientific">Mus musculus</name>
    <name type="common">Mouse</name>
    <dbReference type="NCBI Taxonomy" id="10090"/>
    <lineage>
        <taxon>Eukaryota</taxon>
        <taxon>Metazoa</taxon>
        <taxon>Chordata</taxon>
        <taxon>Craniata</taxon>
        <taxon>Vertebrata</taxon>
        <taxon>Euteleostomi</taxon>
        <taxon>Mammalia</taxon>
        <taxon>Eutheria</taxon>
        <taxon>Euarchontoglires</taxon>
        <taxon>Glires</taxon>
        <taxon>Rodentia</taxon>
        <taxon>Myomorpha</taxon>
        <taxon>Muroidea</taxon>
        <taxon>Muridae</taxon>
        <taxon>Murinae</taxon>
        <taxon>Mus</taxon>
        <taxon>Mus</taxon>
    </lineage>
</organism>
<accession>Q9D7B7</accession>
<accession>Q8VE68</accession>
<sequence>MEPFAAYPLKCSGPKAKIFAVLLSMVLCTVMLFLLQLKFLKPRTNSFYSFEVKDAKGRTVSLEKFKGKASLVVNVASDCRFTDKSYQTLRELHKEFGPYHFNVLAFPCNQFGESEPKSSKEVESFARQNYGVTFPIFHKIKILGPEAEPAFRFIVDSSKKEPRWNFWKYLVNPEGQVVKFWRPEEPLEAIRPHVSQMIGQIILKKKEDL</sequence>
<protein>
    <recommendedName>
        <fullName>Probable glutathione peroxidase 8</fullName>
        <shortName>GPx-8</shortName>
        <shortName>GSHPx-8</shortName>
        <ecNumber>1.11.1.9</ecNumber>
    </recommendedName>
</protein>
<dbReference type="EC" id="1.11.1.9"/>
<dbReference type="EMBL" id="AK009378">
    <property type="protein sequence ID" value="BAB26254.1"/>
    <property type="molecule type" value="mRNA"/>
</dbReference>
<dbReference type="EMBL" id="BC019664">
    <property type="protein sequence ID" value="AAH19664.1"/>
    <property type="molecule type" value="mRNA"/>
</dbReference>
<dbReference type="CCDS" id="CCDS26781.1"/>
<dbReference type="RefSeq" id="NP_081403.1">
    <property type="nucleotide sequence ID" value="NM_027127.3"/>
</dbReference>
<dbReference type="SMR" id="Q9D7B7"/>
<dbReference type="BioGRID" id="213554">
    <property type="interactions" value="3"/>
</dbReference>
<dbReference type="FunCoup" id="Q9D7B7">
    <property type="interactions" value="76"/>
</dbReference>
<dbReference type="STRING" id="10090.ENSMUSP00000022282"/>
<dbReference type="PhosphoSitePlus" id="Q9D7B7"/>
<dbReference type="SwissPalm" id="Q9D7B7"/>
<dbReference type="PaxDb" id="10090-ENSMUSP00000022282"/>
<dbReference type="PeptideAtlas" id="Q9D7B7"/>
<dbReference type="ProteomicsDB" id="271084"/>
<dbReference type="Pumba" id="Q9D7B7"/>
<dbReference type="Antibodypedia" id="23390">
    <property type="antibodies" value="114 antibodies from 23 providers"/>
</dbReference>
<dbReference type="DNASU" id="69590"/>
<dbReference type="Ensembl" id="ENSMUST00000022282.6">
    <property type="protein sequence ID" value="ENSMUSP00000022282.4"/>
    <property type="gene ID" value="ENSMUSG00000021760.6"/>
</dbReference>
<dbReference type="GeneID" id="69590"/>
<dbReference type="KEGG" id="mmu:69590"/>
<dbReference type="UCSC" id="uc007rxb.1">
    <property type="organism name" value="mouse"/>
</dbReference>
<dbReference type="AGR" id="MGI:1916840"/>
<dbReference type="CTD" id="493869"/>
<dbReference type="MGI" id="MGI:1916840">
    <property type="gene designation" value="Gpx8"/>
</dbReference>
<dbReference type="VEuPathDB" id="HostDB:ENSMUSG00000021760"/>
<dbReference type="eggNOG" id="KOG1651">
    <property type="taxonomic scope" value="Eukaryota"/>
</dbReference>
<dbReference type="GeneTree" id="ENSGT00940000159371"/>
<dbReference type="HOGENOM" id="CLU_029507_0_1_1"/>
<dbReference type="InParanoid" id="Q9D7B7"/>
<dbReference type="OMA" id="PTWNFCK"/>
<dbReference type="OrthoDB" id="446890at2759"/>
<dbReference type="PhylomeDB" id="Q9D7B7"/>
<dbReference type="TreeFam" id="TF331942"/>
<dbReference type="Reactome" id="R-MMU-3299685">
    <property type="pathway name" value="Detoxification of Reactive Oxygen Species"/>
</dbReference>
<dbReference type="BioGRID-ORCS" id="69590">
    <property type="hits" value="2 hits in 77 CRISPR screens"/>
</dbReference>
<dbReference type="ChiTaRS" id="Gpx8">
    <property type="organism name" value="mouse"/>
</dbReference>
<dbReference type="PRO" id="PR:Q9D7B7"/>
<dbReference type="Proteomes" id="UP000000589">
    <property type="component" value="Chromosome 13"/>
</dbReference>
<dbReference type="RNAct" id="Q9D7B7">
    <property type="molecule type" value="protein"/>
</dbReference>
<dbReference type="Bgee" id="ENSMUSG00000021760">
    <property type="expression patterns" value="Expressed in humerus cartilage element and 246 other cell types or tissues"/>
</dbReference>
<dbReference type="ExpressionAtlas" id="Q9D7B7">
    <property type="expression patterns" value="baseline and differential"/>
</dbReference>
<dbReference type="GO" id="GO:0016020">
    <property type="term" value="C:membrane"/>
    <property type="evidence" value="ECO:0007669"/>
    <property type="project" value="UniProtKB-SubCell"/>
</dbReference>
<dbReference type="GO" id="GO:0004602">
    <property type="term" value="F:glutathione peroxidase activity"/>
    <property type="evidence" value="ECO:0007669"/>
    <property type="project" value="UniProtKB-EC"/>
</dbReference>
<dbReference type="GO" id="GO:0006979">
    <property type="term" value="P:response to oxidative stress"/>
    <property type="evidence" value="ECO:0007669"/>
    <property type="project" value="InterPro"/>
</dbReference>
<dbReference type="CDD" id="cd00340">
    <property type="entry name" value="GSH_Peroxidase"/>
    <property type="match status" value="1"/>
</dbReference>
<dbReference type="FunFam" id="3.40.30.10:FF:000049">
    <property type="entry name" value="Glutathione peroxidase"/>
    <property type="match status" value="1"/>
</dbReference>
<dbReference type="Gene3D" id="3.40.30.10">
    <property type="entry name" value="Glutaredoxin"/>
    <property type="match status" value="1"/>
</dbReference>
<dbReference type="InterPro" id="IPR013376">
    <property type="entry name" value="Glut_perox_Gpx7"/>
</dbReference>
<dbReference type="InterPro" id="IPR000889">
    <property type="entry name" value="Glutathione_peroxidase"/>
</dbReference>
<dbReference type="InterPro" id="IPR029760">
    <property type="entry name" value="GPX_CS"/>
</dbReference>
<dbReference type="InterPro" id="IPR036249">
    <property type="entry name" value="Thioredoxin-like_sf"/>
</dbReference>
<dbReference type="NCBIfam" id="TIGR02540">
    <property type="entry name" value="gpx7"/>
    <property type="match status" value="1"/>
</dbReference>
<dbReference type="PANTHER" id="PTHR11592">
    <property type="entry name" value="GLUTATHIONE PEROXIDASE"/>
    <property type="match status" value="1"/>
</dbReference>
<dbReference type="PANTHER" id="PTHR11592:SF7">
    <property type="entry name" value="GLUTATHIONE PEROXIDASE 8-RELATED"/>
    <property type="match status" value="1"/>
</dbReference>
<dbReference type="Pfam" id="PF00255">
    <property type="entry name" value="GSHPx"/>
    <property type="match status" value="1"/>
</dbReference>
<dbReference type="PIRSF" id="PIRSF000303">
    <property type="entry name" value="Glutathion_perox"/>
    <property type="match status" value="1"/>
</dbReference>
<dbReference type="PRINTS" id="PR01011">
    <property type="entry name" value="GLUTPROXDASE"/>
</dbReference>
<dbReference type="SUPFAM" id="SSF52833">
    <property type="entry name" value="Thioredoxin-like"/>
    <property type="match status" value="1"/>
</dbReference>
<dbReference type="PROSITE" id="PS00763">
    <property type="entry name" value="GLUTATHIONE_PEROXID_2"/>
    <property type="match status" value="1"/>
</dbReference>
<dbReference type="PROSITE" id="PS51355">
    <property type="entry name" value="GLUTATHIONE_PEROXID_3"/>
    <property type="match status" value="1"/>
</dbReference>
<reference key="1">
    <citation type="journal article" date="2005" name="Science">
        <title>The transcriptional landscape of the mammalian genome.</title>
        <authorList>
            <person name="Carninci P."/>
            <person name="Kasukawa T."/>
            <person name="Katayama S."/>
            <person name="Gough J."/>
            <person name="Frith M.C."/>
            <person name="Maeda N."/>
            <person name="Oyama R."/>
            <person name="Ravasi T."/>
            <person name="Lenhard B."/>
            <person name="Wells C."/>
            <person name="Kodzius R."/>
            <person name="Shimokawa K."/>
            <person name="Bajic V.B."/>
            <person name="Brenner S.E."/>
            <person name="Batalov S."/>
            <person name="Forrest A.R."/>
            <person name="Zavolan M."/>
            <person name="Davis M.J."/>
            <person name="Wilming L.G."/>
            <person name="Aidinis V."/>
            <person name="Allen J.E."/>
            <person name="Ambesi-Impiombato A."/>
            <person name="Apweiler R."/>
            <person name="Aturaliya R.N."/>
            <person name="Bailey T.L."/>
            <person name="Bansal M."/>
            <person name="Baxter L."/>
            <person name="Beisel K.W."/>
            <person name="Bersano T."/>
            <person name="Bono H."/>
            <person name="Chalk A.M."/>
            <person name="Chiu K.P."/>
            <person name="Choudhary V."/>
            <person name="Christoffels A."/>
            <person name="Clutterbuck D.R."/>
            <person name="Crowe M.L."/>
            <person name="Dalla E."/>
            <person name="Dalrymple B.P."/>
            <person name="de Bono B."/>
            <person name="Della Gatta G."/>
            <person name="di Bernardo D."/>
            <person name="Down T."/>
            <person name="Engstrom P."/>
            <person name="Fagiolini M."/>
            <person name="Faulkner G."/>
            <person name="Fletcher C.F."/>
            <person name="Fukushima T."/>
            <person name="Furuno M."/>
            <person name="Futaki S."/>
            <person name="Gariboldi M."/>
            <person name="Georgii-Hemming P."/>
            <person name="Gingeras T.R."/>
            <person name="Gojobori T."/>
            <person name="Green R.E."/>
            <person name="Gustincich S."/>
            <person name="Harbers M."/>
            <person name="Hayashi Y."/>
            <person name="Hensch T.K."/>
            <person name="Hirokawa N."/>
            <person name="Hill D."/>
            <person name="Huminiecki L."/>
            <person name="Iacono M."/>
            <person name="Ikeo K."/>
            <person name="Iwama A."/>
            <person name="Ishikawa T."/>
            <person name="Jakt M."/>
            <person name="Kanapin A."/>
            <person name="Katoh M."/>
            <person name="Kawasawa Y."/>
            <person name="Kelso J."/>
            <person name="Kitamura H."/>
            <person name="Kitano H."/>
            <person name="Kollias G."/>
            <person name="Krishnan S.P."/>
            <person name="Kruger A."/>
            <person name="Kummerfeld S.K."/>
            <person name="Kurochkin I.V."/>
            <person name="Lareau L.F."/>
            <person name="Lazarevic D."/>
            <person name="Lipovich L."/>
            <person name="Liu J."/>
            <person name="Liuni S."/>
            <person name="McWilliam S."/>
            <person name="Madan Babu M."/>
            <person name="Madera M."/>
            <person name="Marchionni L."/>
            <person name="Matsuda H."/>
            <person name="Matsuzawa S."/>
            <person name="Miki H."/>
            <person name="Mignone F."/>
            <person name="Miyake S."/>
            <person name="Morris K."/>
            <person name="Mottagui-Tabar S."/>
            <person name="Mulder N."/>
            <person name="Nakano N."/>
            <person name="Nakauchi H."/>
            <person name="Ng P."/>
            <person name="Nilsson R."/>
            <person name="Nishiguchi S."/>
            <person name="Nishikawa S."/>
            <person name="Nori F."/>
            <person name="Ohara O."/>
            <person name="Okazaki Y."/>
            <person name="Orlando V."/>
            <person name="Pang K.C."/>
            <person name="Pavan W.J."/>
            <person name="Pavesi G."/>
            <person name="Pesole G."/>
            <person name="Petrovsky N."/>
            <person name="Piazza S."/>
            <person name="Reed J."/>
            <person name="Reid J.F."/>
            <person name="Ring B.Z."/>
            <person name="Ringwald M."/>
            <person name="Rost B."/>
            <person name="Ruan Y."/>
            <person name="Salzberg S.L."/>
            <person name="Sandelin A."/>
            <person name="Schneider C."/>
            <person name="Schoenbach C."/>
            <person name="Sekiguchi K."/>
            <person name="Semple C.A."/>
            <person name="Seno S."/>
            <person name="Sessa L."/>
            <person name="Sheng Y."/>
            <person name="Shibata Y."/>
            <person name="Shimada H."/>
            <person name="Shimada K."/>
            <person name="Silva D."/>
            <person name="Sinclair B."/>
            <person name="Sperling S."/>
            <person name="Stupka E."/>
            <person name="Sugiura K."/>
            <person name="Sultana R."/>
            <person name="Takenaka Y."/>
            <person name="Taki K."/>
            <person name="Tammoja K."/>
            <person name="Tan S.L."/>
            <person name="Tang S."/>
            <person name="Taylor M.S."/>
            <person name="Tegner J."/>
            <person name="Teichmann S.A."/>
            <person name="Ueda H.R."/>
            <person name="van Nimwegen E."/>
            <person name="Verardo R."/>
            <person name="Wei C.L."/>
            <person name="Yagi K."/>
            <person name="Yamanishi H."/>
            <person name="Zabarovsky E."/>
            <person name="Zhu S."/>
            <person name="Zimmer A."/>
            <person name="Hide W."/>
            <person name="Bult C."/>
            <person name="Grimmond S.M."/>
            <person name="Teasdale R.D."/>
            <person name="Liu E.T."/>
            <person name="Brusic V."/>
            <person name="Quackenbush J."/>
            <person name="Wahlestedt C."/>
            <person name="Mattick J.S."/>
            <person name="Hume D.A."/>
            <person name="Kai C."/>
            <person name="Sasaki D."/>
            <person name="Tomaru Y."/>
            <person name="Fukuda S."/>
            <person name="Kanamori-Katayama M."/>
            <person name="Suzuki M."/>
            <person name="Aoki J."/>
            <person name="Arakawa T."/>
            <person name="Iida J."/>
            <person name="Imamura K."/>
            <person name="Itoh M."/>
            <person name="Kato T."/>
            <person name="Kawaji H."/>
            <person name="Kawagashira N."/>
            <person name="Kawashima T."/>
            <person name="Kojima M."/>
            <person name="Kondo S."/>
            <person name="Konno H."/>
            <person name="Nakano K."/>
            <person name="Ninomiya N."/>
            <person name="Nishio T."/>
            <person name="Okada M."/>
            <person name="Plessy C."/>
            <person name="Shibata K."/>
            <person name="Shiraki T."/>
            <person name="Suzuki S."/>
            <person name="Tagami M."/>
            <person name="Waki K."/>
            <person name="Watahiki A."/>
            <person name="Okamura-Oho Y."/>
            <person name="Suzuki H."/>
            <person name="Kawai J."/>
            <person name="Hayashizaki Y."/>
        </authorList>
    </citation>
    <scope>NUCLEOTIDE SEQUENCE [LARGE SCALE MRNA]</scope>
    <source>
        <strain>C57BL/6J</strain>
        <tissue>Tongue</tissue>
    </source>
</reference>
<reference key="2">
    <citation type="journal article" date="2004" name="Genome Res.">
        <title>The status, quality, and expansion of the NIH full-length cDNA project: the Mammalian Gene Collection (MGC).</title>
        <authorList>
            <consortium name="The MGC Project Team"/>
        </authorList>
    </citation>
    <scope>NUCLEOTIDE SEQUENCE [LARGE SCALE MRNA]</scope>
    <source>
        <strain>Czech II</strain>
        <tissue>Mammary tumor</tissue>
    </source>
</reference>
<reference key="3">
    <citation type="journal article" date="2010" name="Cell">
        <title>A tissue-specific atlas of mouse protein phosphorylation and expression.</title>
        <authorList>
            <person name="Huttlin E.L."/>
            <person name="Jedrychowski M.P."/>
            <person name="Elias J.E."/>
            <person name="Goswami T."/>
            <person name="Rad R."/>
            <person name="Beausoleil S.A."/>
            <person name="Villen J."/>
            <person name="Haas W."/>
            <person name="Sowa M.E."/>
            <person name="Gygi S.P."/>
        </authorList>
    </citation>
    <scope>IDENTIFICATION BY MASS SPECTROMETRY [LARGE SCALE ANALYSIS]</scope>
    <source>
        <tissue>Heart</tissue>
        <tissue>Lung</tissue>
    </source>
</reference>
<evidence type="ECO:0000250" key="1"/>
<evidence type="ECO:0000250" key="2">
    <source>
        <dbReference type="UniProtKB" id="Q8TED1"/>
    </source>
</evidence>
<evidence type="ECO:0000255" key="3"/>
<evidence type="ECO:0000305" key="4"/>
<keyword id="KW-0007">Acetylation</keyword>
<keyword id="KW-0472">Membrane</keyword>
<keyword id="KW-0560">Oxidoreductase</keyword>
<keyword id="KW-0575">Peroxidase</keyword>
<keyword id="KW-1185">Reference proteome</keyword>
<keyword id="KW-0812">Transmembrane</keyword>
<keyword id="KW-1133">Transmembrane helix</keyword>
<name>GPX8_MOUSE</name>
<feature type="chain" id="PRO_0000317757" description="Probable glutathione peroxidase 8">
    <location>
        <begin position="1"/>
        <end position="209"/>
    </location>
</feature>
<feature type="transmembrane region" description="Helical" evidence="3">
    <location>
        <begin position="18"/>
        <end position="40"/>
    </location>
</feature>
<feature type="active site" evidence="1">
    <location>
        <position position="79"/>
    </location>
</feature>
<feature type="modified residue" description="N-acetylmethionine" evidence="2">
    <location>
        <position position="1"/>
    </location>
</feature>
<feature type="sequence conflict" description="In Ref. 2; AAH19664." evidence="4" ref="2">
    <original>T</original>
    <variation>I</variation>
    <location>
        <position position="88"/>
    </location>
</feature>